<feature type="chain" id="PRO_1000134639" description="Small ribosomal subunit protein uS12">
    <location>
        <begin position="1"/>
        <end position="123"/>
    </location>
</feature>
<feature type="region of interest" description="Disordered" evidence="3">
    <location>
        <begin position="101"/>
        <end position="123"/>
    </location>
</feature>
<feature type="compositionally biased region" description="Basic residues" evidence="3">
    <location>
        <begin position="113"/>
        <end position="123"/>
    </location>
</feature>
<feature type="modified residue" description="3-methylthioaspartic acid" evidence="1">
    <location>
        <position position="89"/>
    </location>
</feature>
<proteinExistence type="inferred from homology"/>
<name>RS12_LARHH</name>
<comment type="function">
    <text evidence="2">With S4 and S5 plays an important role in translational accuracy.</text>
</comment>
<comment type="function">
    <text evidence="2">Interacts with and stabilizes bases of the 16S rRNA that are involved in tRNA selection in the A site and with the mRNA backbone. Located at the interface of the 30S and 50S subunits, it traverses the body of the 30S subunit contacting proteins on the other side and probably holding the rRNA structure together. The combined cluster of proteins S8, S12 and S17 appears to hold together the shoulder and platform of the 30S subunit.</text>
</comment>
<comment type="subunit">
    <text evidence="2">Part of the 30S ribosomal subunit. Contacts proteins S8 and S17. May interact with IF1 in the 30S initiation complex.</text>
</comment>
<comment type="similarity">
    <text evidence="2">Belongs to the universal ribosomal protein uS12 family.</text>
</comment>
<sequence length="123" mass="13607">MPTINQLVRKGRLAIKAKSKVPALEACPQKRGVCTRVYTTTPKKPNSALRKVCKVRLTNGFEVISYIGGEGHNLQEHSVVLIRGGRVKDLPGVRYHTVRGSLDTAGVKDRKQSRSKYGAKRPK</sequence>
<dbReference type="EMBL" id="CP001154">
    <property type="protein sequence ID" value="ACO73243.1"/>
    <property type="molecule type" value="Genomic_DNA"/>
</dbReference>
<dbReference type="RefSeq" id="WP_012695738.1">
    <property type="nucleotide sequence ID" value="NC_012559.1"/>
</dbReference>
<dbReference type="SMR" id="C1DAR2"/>
<dbReference type="STRING" id="557598.LHK_00248"/>
<dbReference type="GeneID" id="75110368"/>
<dbReference type="KEGG" id="lhk:LHK_00248"/>
<dbReference type="eggNOG" id="COG0048">
    <property type="taxonomic scope" value="Bacteria"/>
</dbReference>
<dbReference type="HOGENOM" id="CLU_104295_1_2_4"/>
<dbReference type="Proteomes" id="UP000002010">
    <property type="component" value="Chromosome"/>
</dbReference>
<dbReference type="GO" id="GO:0015935">
    <property type="term" value="C:small ribosomal subunit"/>
    <property type="evidence" value="ECO:0007669"/>
    <property type="project" value="InterPro"/>
</dbReference>
<dbReference type="GO" id="GO:0019843">
    <property type="term" value="F:rRNA binding"/>
    <property type="evidence" value="ECO:0007669"/>
    <property type="project" value="UniProtKB-UniRule"/>
</dbReference>
<dbReference type="GO" id="GO:0003735">
    <property type="term" value="F:structural constituent of ribosome"/>
    <property type="evidence" value="ECO:0007669"/>
    <property type="project" value="InterPro"/>
</dbReference>
<dbReference type="GO" id="GO:0000049">
    <property type="term" value="F:tRNA binding"/>
    <property type="evidence" value="ECO:0007669"/>
    <property type="project" value="UniProtKB-UniRule"/>
</dbReference>
<dbReference type="GO" id="GO:0006412">
    <property type="term" value="P:translation"/>
    <property type="evidence" value="ECO:0007669"/>
    <property type="project" value="UniProtKB-UniRule"/>
</dbReference>
<dbReference type="CDD" id="cd03368">
    <property type="entry name" value="Ribosomal_S12"/>
    <property type="match status" value="1"/>
</dbReference>
<dbReference type="FunFam" id="2.40.50.140:FF:000001">
    <property type="entry name" value="30S ribosomal protein S12"/>
    <property type="match status" value="1"/>
</dbReference>
<dbReference type="Gene3D" id="2.40.50.140">
    <property type="entry name" value="Nucleic acid-binding proteins"/>
    <property type="match status" value="1"/>
</dbReference>
<dbReference type="HAMAP" id="MF_00403_B">
    <property type="entry name" value="Ribosomal_uS12_B"/>
    <property type="match status" value="1"/>
</dbReference>
<dbReference type="InterPro" id="IPR012340">
    <property type="entry name" value="NA-bd_OB-fold"/>
</dbReference>
<dbReference type="InterPro" id="IPR006032">
    <property type="entry name" value="Ribosomal_uS12"/>
</dbReference>
<dbReference type="InterPro" id="IPR005679">
    <property type="entry name" value="Ribosomal_uS12_bac"/>
</dbReference>
<dbReference type="NCBIfam" id="TIGR00981">
    <property type="entry name" value="rpsL_bact"/>
    <property type="match status" value="1"/>
</dbReference>
<dbReference type="PANTHER" id="PTHR11652">
    <property type="entry name" value="30S RIBOSOMAL PROTEIN S12 FAMILY MEMBER"/>
    <property type="match status" value="1"/>
</dbReference>
<dbReference type="Pfam" id="PF00164">
    <property type="entry name" value="Ribosom_S12_S23"/>
    <property type="match status" value="1"/>
</dbReference>
<dbReference type="PIRSF" id="PIRSF002133">
    <property type="entry name" value="Ribosomal_S12/S23"/>
    <property type="match status" value="1"/>
</dbReference>
<dbReference type="PRINTS" id="PR01034">
    <property type="entry name" value="RIBOSOMALS12"/>
</dbReference>
<dbReference type="SUPFAM" id="SSF50249">
    <property type="entry name" value="Nucleic acid-binding proteins"/>
    <property type="match status" value="1"/>
</dbReference>
<dbReference type="PROSITE" id="PS00055">
    <property type="entry name" value="RIBOSOMAL_S12"/>
    <property type="match status" value="1"/>
</dbReference>
<reference key="1">
    <citation type="journal article" date="2009" name="PLoS Genet.">
        <title>The complete genome and proteome of Laribacter hongkongensis reveal potential mechanisms for adaptations to different temperatures and habitats.</title>
        <authorList>
            <person name="Woo P.C.Y."/>
            <person name="Lau S.K.P."/>
            <person name="Tse H."/>
            <person name="Teng J.L.L."/>
            <person name="Curreem S.O."/>
            <person name="Tsang A.K.L."/>
            <person name="Fan R.Y.Y."/>
            <person name="Wong G.K.M."/>
            <person name="Huang Y."/>
            <person name="Loman N.J."/>
            <person name="Snyder L.A.S."/>
            <person name="Cai J.J."/>
            <person name="Huang J.-D."/>
            <person name="Mak W."/>
            <person name="Pallen M.J."/>
            <person name="Lok S."/>
            <person name="Yuen K.-Y."/>
        </authorList>
    </citation>
    <scope>NUCLEOTIDE SEQUENCE [LARGE SCALE GENOMIC DNA]</scope>
    <source>
        <strain>HLHK9</strain>
    </source>
</reference>
<accession>C1DAR2</accession>
<evidence type="ECO:0000250" key="1"/>
<evidence type="ECO:0000255" key="2">
    <source>
        <dbReference type="HAMAP-Rule" id="MF_00403"/>
    </source>
</evidence>
<evidence type="ECO:0000256" key="3">
    <source>
        <dbReference type="SAM" id="MobiDB-lite"/>
    </source>
</evidence>
<evidence type="ECO:0000305" key="4"/>
<protein>
    <recommendedName>
        <fullName evidence="2">Small ribosomal subunit protein uS12</fullName>
    </recommendedName>
    <alternativeName>
        <fullName evidence="4">30S ribosomal protein S12</fullName>
    </alternativeName>
</protein>
<organism>
    <name type="scientific">Laribacter hongkongensis (strain HLHK9)</name>
    <dbReference type="NCBI Taxonomy" id="557598"/>
    <lineage>
        <taxon>Bacteria</taxon>
        <taxon>Pseudomonadati</taxon>
        <taxon>Pseudomonadota</taxon>
        <taxon>Betaproteobacteria</taxon>
        <taxon>Neisseriales</taxon>
        <taxon>Aquaspirillaceae</taxon>
        <taxon>Laribacter</taxon>
    </lineage>
</organism>
<keyword id="KW-0488">Methylation</keyword>
<keyword id="KW-1185">Reference proteome</keyword>
<keyword id="KW-0687">Ribonucleoprotein</keyword>
<keyword id="KW-0689">Ribosomal protein</keyword>
<keyword id="KW-0694">RNA-binding</keyword>
<keyword id="KW-0699">rRNA-binding</keyword>
<keyword id="KW-0820">tRNA-binding</keyword>
<gene>
    <name evidence="2" type="primary">rpsL</name>
    <name type="ordered locus">LHK_00248</name>
</gene>